<proteinExistence type="predicted"/>
<keyword id="KW-1185">Reference proteome</keyword>
<organism>
    <name type="scientific">Bradyrhizobium diazoefficiens (strain JCM 10833 / BCRC 13528 / IAM 13628 / NBRC 14792 / USDA 110)</name>
    <dbReference type="NCBI Taxonomy" id="224911"/>
    <lineage>
        <taxon>Bacteria</taxon>
        <taxon>Pseudomonadati</taxon>
        <taxon>Pseudomonadota</taxon>
        <taxon>Alphaproteobacteria</taxon>
        <taxon>Hyphomicrobiales</taxon>
        <taxon>Nitrobacteraceae</taxon>
        <taxon>Bradyrhizobium</taxon>
    </lineage>
</organism>
<name>HOXX_BRADU</name>
<evidence type="ECO:0000269" key="1">
    <source>
    </source>
</evidence>
<evidence type="ECO:0000305" key="2"/>
<evidence type="ECO:0000305" key="3">
    <source>
    </source>
</evidence>
<reference key="1">
    <citation type="journal article" date="1993" name="Mol. Gen. Genet.">
        <title>Identification of a potential transcriptional regulator of hydrogenase activity in free-living Bradyrhizobium japonicum strains.</title>
        <authorList>
            <person name="van Soom C."/>
            <person name="Verreth C."/>
            <person name="Sampaio M.J."/>
            <person name="Vanderleyden J."/>
        </authorList>
    </citation>
    <scope>NUCLEOTIDE SEQUENCE [GENOMIC DNA]</scope>
    <scope>PRELIMINARY FUNCTION</scope>
    <source>
        <strain>CB1809</strain>
    </source>
</reference>
<reference key="2">
    <citation type="journal article" date="2002" name="DNA Res.">
        <title>Complete genomic sequence of nitrogen-fixing symbiotic bacterium Bradyrhizobium japonicum USDA110.</title>
        <authorList>
            <person name="Kaneko T."/>
            <person name="Nakamura Y."/>
            <person name="Sato S."/>
            <person name="Minamisawa K."/>
            <person name="Uchiumi T."/>
            <person name="Sasamoto S."/>
            <person name="Watanabe A."/>
            <person name="Idesawa K."/>
            <person name="Iriguchi M."/>
            <person name="Kawashima K."/>
            <person name="Kohara M."/>
            <person name="Matsumoto M."/>
            <person name="Shimpo S."/>
            <person name="Tsuruoka H."/>
            <person name="Wada T."/>
            <person name="Yamada M."/>
            <person name="Tabata S."/>
        </authorList>
    </citation>
    <scope>NUCLEOTIDE SEQUENCE [LARGE SCALE GENOMIC DNA]</scope>
    <source>
        <strain>JCM 10833 / BCRC 13528 / IAM 13628 / NBRC 14792 / USDA 110</strain>
    </source>
</reference>
<reference key="3">
    <citation type="journal article" date="1997" name="J. Bacteriol.">
        <title>Roles of HoxX and HoxA in biosynthesis of hydrogenase in Bradyrhizobium japonicum.</title>
        <authorList>
            <person name="Durmowicz M.C."/>
            <person name="Maier R.J."/>
        </authorList>
    </citation>
    <scope>FUNCTION</scope>
</reference>
<feature type="chain" id="PRO_0000209510" description="Hydrogenase maturation factor HoxX">
    <location>
        <begin position="1"/>
        <end position="566"/>
    </location>
</feature>
<feature type="sequence conflict" description="In Ref. 1." evidence="2" ref="1">
    <original>I</original>
    <variation>V</variation>
    <location>
        <position position="113"/>
    </location>
</feature>
<feature type="sequence conflict" description="In Ref. 1." evidence="2" ref="1">
    <original>S</original>
    <variation>A</variation>
    <location>
        <position position="115"/>
    </location>
</feature>
<feature type="sequence conflict" description="In Ref. 1; CAA78990." evidence="2" ref="1">
    <original>C</original>
    <variation>R</variation>
    <location>
        <position position="123"/>
    </location>
</feature>
<feature type="sequence conflict" description="In Ref. 1; CAA78990." evidence="2" ref="1">
    <original>A</original>
    <variation>V</variation>
    <location>
        <position position="161"/>
    </location>
</feature>
<feature type="sequence conflict" description="In Ref. 1; CAA78990." evidence="2" ref="1">
    <original>M</original>
    <variation>A</variation>
    <location>
        <position position="187"/>
    </location>
</feature>
<feature type="sequence conflict" description="In Ref. 1; CAA78990." evidence="2" ref="1">
    <original>K</original>
    <variation>R</variation>
    <location>
        <position position="252"/>
    </location>
</feature>
<feature type="sequence conflict" description="In Ref. 1; CAA78990." evidence="2" ref="1">
    <original>E</original>
    <variation>G</variation>
    <location>
        <position position="345"/>
    </location>
</feature>
<feature type="sequence conflict" description="In Ref. 1; CAA78990." evidence="2" ref="1">
    <original>I</original>
    <variation>V</variation>
    <location>
        <position position="406"/>
    </location>
</feature>
<feature type="sequence conflict" description="In Ref. 1; CAA78990." evidence="2" ref="1">
    <original>Q</original>
    <variation>R</variation>
    <location>
        <position position="474"/>
    </location>
</feature>
<dbReference type="EMBL" id="Z17373">
    <property type="protein sequence ID" value="CAA78990.1"/>
    <property type="molecule type" value="Genomic_DNA"/>
</dbReference>
<dbReference type="EMBL" id="BA000040">
    <property type="protein sequence ID" value="BAC52191.1"/>
    <property type="molecule type" value="Genomic_DNA"/>
</dbReference>
<dbReference type="PIR" id="S35231">
    <property type="entry name" value="S35231"/>
</dbReference>
<dbReference type="RefSeq" id="NP_773566.1">
    <property type="nucleotide sequence ID" value="NC_004463.1"/>
</dbReference>
<dbReference type="RefSeq" id="WP_011089664.1">
    <property type="nucleotide sequence ID" value="NC_004463.1"/>
</dbReference>
<dbReference type="SMR" id="P31907"/>
<dbReference type="STRING" id="224911.AAV28_32220"/>
<dbReference type="EnsemblBacteria" id="BAC52191">
    <property type="protein sequence ID" value="BAC52191"/>
    <property type="gene ID" value="BAC52191"/>
</dbReference>
<dbReference type="GeneID" id="46493892"/>
<dbReference type="KEGG" id="bja:bll6926"/>
<dbReference type="PATRIC" id="fig|224911.44.peg.6960"/>
<dbReference type="eggNOG" id="COG0223">
    <property type="taxonomic scope" value="Bacteria"/>
</dbReference>
<dbReference type="eggNOG" id="COG1024">
    <property type="taxonomic scope" value="Bacteria"/>
</dbReference>
<dbReference type="HOGENOM" id="CLU_008537_1_0_5"/>
<dbReference type="InParanoid" id="P31907"/>
<dbReference type="OrthoDB" id="580992at2"/>
<dbReference type="Proteomes" id="UP000002526">
    <property type="component" value="Chromosome"/>
</dbReference>
<dbReference type="GO" id="GO:0003824">
    <property type="term" value="F:catalytic activity"/>
    <property type="evidence" value="ECO:0007669"/>
    <property type="project" value="InterPro"/>
</dbReference>
<dbReference type="GO" id="GO:0009058">
    <property type="term" value="P:biosynthetic process"/>
    <property type="evidence" value="ECO:0007669"/>
    <property type="project" value="InterPro"/>
</dbReference>
<dbReference type="CDD" id="cd06558">
    <property type="entry name" value="crotonase-like"/>
    <property type="match status" value="1"/>
</dbReference>
<dbReference type="CDD" id="cd08701">
    <property type="entry name" value="FMT_C_HypX"/>
    <property type="match status" value="1"/>
</dbReference>
<dbReference type="CDD" id="cd08650">
    <property type="entry name" value="FMT_core_HypX_N"/>
    <property type="match status" value="1"/>
</dbReference>
<dbReference type="Gene3D" id="3.40.50.12230">
    <property type="match status" value="1"/>
</dbReference>
<dbReference type="Gene3D" id="3.90.226.10">
    <property type="entry name" value="2-enoyl-CoA Hydratase, Chain A, domain 1"/>
    <property type="match status" value="1"/>
</dbReference>
<dbReference type="InterPro" id="IPR029045">
    <property type="entry name" value="ClpP/crotonase-like_dom_sf"/>
</dbReference>
<dbReference type="InterPro" id="IPR001753">
    <property type="entry name" value="Enoyl-CoA_hydra/iso"/>
</dbReference>
<dbReference type="InterPro" id="IPR005793">
    <property type="entry name" value="Formyl_trans_C"/>
</dbReference>
<dbReference type="InterPro" id="IPR002376">
    <property type="entry name" value="Formyl_transf_N"/>
</dbReference>
<dbReference type="InterPro" id="IPR036477">
    <property type="entry name" value="Formyl_transf_N_sf"/>
</dbReference>
<dbReference type="InterPro" id="IPR011034">
    <property type="entry name" value="Formyl_transferase-like_C_sf"/>
</dbReference>
<dbReference type="InterPro" id="IPR047180">
    <property type="entry name" value="HoxX-like"/>
</dbReference>
<dbReference type="InterPro" id="IPR009188">
    <property type="entry name" value="NiFe-hyd_mat_HypX/HoxX"/>
</dbReference>
<dbReference type="PANTHER" id="PTHR43388">
    <property type="entry name" value="HYDROGENASE MATURATION FACTOR HOXX"/>
    <property type="match status" value="1"/>
</dbReference>
<dbReference type="PANTHER" id="PTHR43388:SF1">
    <property type="entry name" value="HYDROGENASE MATURATION FACTOR HOXX"/>
    <property type="match status" value="1"/>
</dbReference>
<dbReference type="Pfam" id="PF00378">
    <property type="entry name" value="ECH_1"/>
    <property type="match status" value="1"/>
</dbReference>
<dbReference type="Pfam" id="PF02911">
    <property type="entry name" value="Formyl_trans_C"/>
    <property type="match status" value="1"/>
</dbReference>
<dbReference type="Pfam" id="PF00551">
    <property type="entry name" value="Formyl_trans_N"/>
    <property type="match status" value="1"/>
</dbReference>
<dbReference type="PIRSF" id="PIRSF006787">
    <property type="entry name" value="Hydrgn_mat_HoxX"/>
    <property type="match status" value="1"/>
</dbReference>
<dbReference type="SUPFAM" id="SSF52096">
    <property type="entry name" value="ClpP/crotonase"/>
    <property type="match status" value="1"/>
</dbReference>
<dbReference type="SUPFAM" id="SSF50486">
    <property type="entry name" value="FMT C-terminal domain-like"/>
    <property type="match status" value="1"/>
</dbReference>
<dbReference type="SUPFAM" id="SSF53328">
    <property type="entry name" value="Formyltransferase"/>
    <property type="match status" value="1"/>
</dbReference>
<protein>
    <recommendedName>
        <fullName>Hydrogenase maturation factor HoxX</fullName>
    </recommendedName>
</protein>
<comment type="function">
    <text evidence="1">Involved in the post-translational processing of the hydrogenase large subunit.</text>
</comment>
<comment type="caution">
    <text evidence="3">Was originally thought to be a sensor protein involved in the regulation of hydrogenase activity.</text>
</comment>
<accession>P31907</accession>
<gene>
    <name type="primary">hoxX</name>
    <name type="ordered locus">bll6926</name>
</gene>
<sequence length="566" mass="61710">MRILLLSHSFNSLTQRLHVELRERGHEVSVELDIHADVTRESVALHRPDLVIAPFLKRAIPDDVWRSVRCLVVHPGPPGDRGPAALDWAVLEGVAEWGVTVLQADGEFDAGPIWSFRSFPMRCAAKSSIYRNELTSCAVAAVLEAVAAIEAGQAAPQPMQAGDPRIRVRGPCRQADRTIDWQHDSTMTVLRKINSADGMPGLVDSLFFQEVRLFDAHEAHDISGVPGTVIAQCEGALARATVDGAVWIGHVKRLAPKSLKLPAAKVFAAEAAYLPHRPGCGYAPIRYREHGEVGELAFSFYNGAMATGDCEALLGAYRAALERPTRVLLLTGGPDYWSNGIHLAEIEAAESAADESWRNINAIDDLARAIIETTDRLVVSVIRGNAGAGGVFLSLAADEVWASDQIILNPHYKDMGNLYGSEYWTYLLPRRAGAANATRITQCRLPMGVAEARRLAIVDRVLSGEALADASLVQSGAAMASDAGFAARLAAKQQRRAADEAEKPLQSYRDEELRRMKLNFYGFDPSYHVARYNFIHKVPKSRTPLTIAGHRIRRAPGRPVGMAVSS</sequence>